<keyword id="KW-0963">Cytoplasm</keyword>
<keyword id="KW-0671">Queuosine biosynthesis</keyword>
<keyword id="KW-1185">Reference proteome</keyword>
<keyword id="KW-0949">S-adenosyl-L-methionine</keyword>
<keyword id="KW-0808">Transferase</keyword>
<accession>Q99Z49</accession>
<accession>Q48Y17</accession>
<dbReference type="EC" id="2.4.99.17" evidence="1"/>
<dbReference type="EMBL" id="AE004092">
    <property type="protein sequence ID" value="AAK34216.1"/>
    <property type="molecule type" value="Genomic_DNA"/>
</dbReference>
<dbReference type="EMBL" id="CP000017">
    <property type="protein sequence ID" value="AAZ51758.1"/>
    <property type="molecule type" value="Genomic_DNA"/>
</dbReference>
<dbReference type="RefSeq" id="NP_269495.1">
    <property type="nucleotide sequence ID" value="NC_002737.2"/>
</dbReference>
<dbReference type="SMR" id="Q99Z49"/>
<dbReference type="PaxDb" id="1314-HKU360_01176"/>
<dbReference type="KEGG" id="spy:SPy_1400"/>
<dbReference type="KEGG" id="spz:M5005_Spy1140"/>
<dbReference type="PATRIC" id="fig|160490.10.peg.1220"/>
<dbReference type="HOGENOM" id="CLU_039110_1_0_9"/>
<dbReference type="OMA" id="YSYGDGM"/>
<dbReference type="UniPathway" id="UPA00392"/>
<dbReference type="Proteomes" id="UP000000750">
    <property type="component" value="Chromosome"/>
</dbReference>
<dbReference type="GO" id="GO:0005737">
    <property type="term" value="C:cytoplasm"/>
    <property type="evidence" value="ECO:0007669"/>
    <property type="project" value="UniProtKB-SubCell"/>
</dbReference>
<dbReference type="GO" id="GO:0051075">
    <property type="term" value="F:S-adenosylmethionine:tRNA ribosyltransferase-isomerase activity"/>
    <property type="evidence" value="ECO:0007669"/>
    <property type="project" value="UniProtKB-EC"/>
</dbReference>
<dbReference type="GO" id="GO:0008616">
    <property type="term" value="P:queuosine biosynthetic process"/>
    <property type="evidence" value="ECO:0007669"/>
    <property type="project" value="UniProtKB-UniRule"/>
</dbReference>
<dbReference type="GO" id="GO:0002099">
    <property type="term" value="P:tRNA wobble guanine modification"/>
    <property type="evidence" value="ECO:0007669"/>
    <property type="project" value="TreeGrafter"/>
</dbReference>
<dbReference type="FunFam" id="2.40.10.240:FF:000002">
    <property type="entry name" value="S-adenosylmethionine:tRNA ribosyltransferase-isomerase"/>
    <property type="match status" value="1"/>
</dbReference>
<dbReference type="FunFam" id="3.40.1780.10:FF:000001">
    <property type="entry name" value="S-adenosylmethionine:tRNA ribosyltransferase-isomerase"/>
    <property type="match status" value="1"/>
</dbReference>
<dbReference type="Gene3D" id="2.40.10.240">
    <property type="entry name" value="QueA-like"/>
    <property type="match status" value="1"/>
</dbReference>
<dbReference type="Gene3D" id="3.40.1780.10">
    <property type="entry name" value="QueA-like"/>
    <property type="match status" value="1"/>
</dbReference>
<dbReference type="HAMAP" id="MF_00113">
    <property type="entry name" value="QueA"/>
    <property type="match status" value="1"/>
</dbReference>
<dbReference type="InterPro" id="IPR003699">
    <property type="entry name" value="QueA"/>
</dbReference>
<dbReference type="InterPro" id="IPR042118">
    <property type="entry name" value="QueA_dom1"/>
</dbReference>
<dbReference type="InterPro" id="IPR042119">
    <property type="entry name" value="QueA_dom2"/>
</dbReference>
<dbReference type="InterPro" id="IPR036100">
    <property type="entry name" value="QueA_sf"/>
</dbReference>
<dbReference type="NCBIfam" id="NF001140">
    <property type="entry name" value="PRK00147.1"/>
    <property type="match status" value="1"/>
</dbReference>
<dbReference type="NCBIfam" id="TIGR00113">
    <property type="entry name" value="queA"/>
    <property type="match status" value="1"/>
</dbReference>
<dbReference type="PANTHER" id="PTHR30307">
    <property type="entry name" value="S-ADENOSYLMETHIONINE:TRNA RIBOSYLTRANSFERASE-ISOMERASE"/>
    <property type="match status" value="1"/>
</dbReference>
<dbReference type="PANTHER" id="PTHR30307:SF0">
    <property type="entry name" value="S-ADENOSYLMETHIONINE:TRNA RIBOSYLTRANSFERASE-ISOMERASE"/>
    <property type="match status" value="1"/>
</dbReference>
<dbReference type="Pfam" id="PF02547">
    <property type="entry name" value="Queuosine_synth"/>
    <property type="match status" value="1"/>
</dbReference>
<dbReference type="SUPFAM" id="SSF111337">
    <property type="entry name" value="QueA-like"/>
    <property type="match status" value="1"/>
</dbReference>
<gene>
    <name evidence="1" type="primary">queA</name>
    <name type="ordered locus">SPy_1400</name>
    <name type="ordered locus">M5005_Spy1140</name>
</gene>
<protein>
    <recommendedName>
        <fullName evidence="1">S-adenosylmethionine:tRNA ribosyltransferase-isomerase</fullName>
        <ecNumber evidence="1">2.4.99.17</ecNumber>
    </recommendedName>
    <alternativeName>
        <fullName evidence="1">Queuosine biosynthesis protein QueA</fullName>
    </alternativeName>
</protein>
<comment type="function">
    <text evidence="1">Transfers and isomerizes the ribose moiety from AdoMet to the 7-aminomethyl group of 7-deazaguanine (preQ1-tRNA) to give epoxyqueuosine (oQ-tRNA).</text>
</comment>
<comment type="catalytic activity">
    <reaction evidence="1">
        <text>7-aminomethyl-7-carbaguanosine(34) in tRNA + S-adenosyl-L-methionine = epoxyqueuosine(34) in tRNA + adenine + L-methionine + 2 H(+)</text>
        <dbReference type="Rhea" id="RHEA:32155"/>
        <dbReference type="Rhea" id="RHEA-COMP:10342"/>
        <dbReference type="Rhea" id="RHEA-COMP:18582"/>
        <dbReference type="ChEBI" id="CHEBI:15378"/>
        <dbReference type="ChEBI" id="CHEBI:16708"/>
        <dbReference type="ChEBI" id="CHEBI:57844"/>
        <dbReference type="ChEBI" id="CHEBI:59789"/>
        <dbReference type="ChEBI" id="CHEBI:82833"/>
        <dbReference type="ChEBI" id="CHEBI:194443"/>
        <dbReference type="EC" id="2.4.99.17"/>
    </reaction>
</comment>
<comment type="pathway">
    <text evidence="1">tRNA modification; tRNA-queuosine biosynthesis.</text>
</comment>
<comment type="subunit">
    <text evidence="1">Monomer.</text>
</comment>
<comment type="subcellular location">
    <subcellularLocation>
        <location evidence="1">Cytoplasm</location>
    </subcellularLocation>
</comment>
<comment type="similarity">
    <text evidence="1">Belongs to the QueA family.</text>
</comment>
<sequence length="342" mass="38351">MNTNNFDFELPEELIAQTPLEKRDSSKLLIIDHRQKTMVDSHFDHIIDQLNPGDALVMNNTRVLPARLYGEKPDTHGHVELLLLKNTQGDQWEVLAKPAKRLKVGSQVNFGDGRLKATIIDELEHGGRIVEFSYDGIFLEVLESLGEMPLPPYIHEKLEDAERYQTVYAKENGSAAAPTAGLHFTTDLLKKIEAKGVHLVYLTLHVGLGTFRPVSVDNLDEHDMHSEFYSLSEEAAQTLRDVKQAGGRVVAVGTTSIRTLETIGGKFQGDIQADSGWTNIFIKPGYQFKVVDAFSTNFHLPKSTLVMLVSAFAGRDFVLEAYRHAVDEKYRFFSFGDAMFVN</sequence>
<organism>
    <name type="scientific">Streptococcus pyogenes serotype M1</name>
    <dbReference type="NCBI Taxonomy" id="301447"/>
    <lineage>
        <taxon>Bacteria</taxon>
        <taxon>Bacillati</taxon>
        <taxon>Bacillota</taxon>
        <taxon>Bacilli</taxon>
        <taxon>Lactobacillales</taxon>
        <taxon>Streptococcaceae</taxon>
        <taxon>Streptococcus</taxon>
    </lineage>
</organism>
<reference key="1">
    <citation type="journal article" date="2001" name="Proc. Natl. Acad. Sci. U.S.A.">
        <title>Complete genome sequence of an M1 strain of Streptococcus pyogenes.</title>
        <authorList>
            <person name="Ferretti J.J."/>
            <person name="McShan W.M."/>
            <person name="Ajdic D.J."/>
            <person name="Savic D.J."/>
            <person name="Savic G."/>
            <person name="Lyon K."/>
            <person name="Primeaux C."/>
            <person name="Sezate S."/>
            <person name="Suvorov A.N."/>
            <person name="Kenton S."/>
            <person name="Lai H.S."/>
            <person name="Lin S.P."/>
            <person name="Qian Y."/>
            <person name="Jia H.G."/>
            <person name="Najar F.Z."/>
            <person name="Ren Q."/>
            <person name="Zhu H."/>
            <person name="Song L."/>
            <person name="White J."/>
            <person name="Yuan X."/>
            <person name="Clifton S.W."/>
            <person name="Roe B.A."/>
            <person name="McLaughlin R.E."/>
        </authorList>
    </citation>
    <scope>NUCLEOTIDE SEQUENCE [LARGE SCALE GENOMIC DNA]</scope>
    <source>
        <strain>ATCC 700294 / SF370 / Serotype M1</strain>
    </source>
</reference>
<reference key="2">
    <citation type="journal article" date="2005" name="J. Infect. Dis.">
        <title>Evolutionary origin and emergence of a highly successful clone of serotype M1 group A Streptococcus involved multiple horizontal gene transfer events.</title>
        <authorList>
            <person name="Sumby P."/>
            <person name="Porcella S.F."/>
            <person name="Madrigal A.G."/>
            <person name="Barbian K.D."/>
            <person name="Virtaneva K."/>
            <person name="Ricklefs S.M."/>
            <person name="Sturdevant D.E."/>
            <person name="Graham M.R."/>
            <person name="Vuopio-Varkila J."/>
            <person name="Hoe N.P."/>
            <person name="Musser J.M."/>
        </authorList>
    </citation>
    <scope>NUCLEOTIDE SEQUENCE [LARGE SCALE GENOMIC DNA]</scope>
    <source>
        <strain>ATCC BAA-947 / MGAS5005 / Serotype M1</strain>
    </source>
</reference>
<feature type="chain" id="PRO_0000165451" description="S-adenosylmethionine:tRNA ribosyltransferase-isomerase">
    <location>
        <begin position="1"/>
        <end position="342"/>
    </location>
</feature>
<evidence type="ECO:0000255" key="1">
    <source>
        <dbReference type="HAMAP-Rule" id="MF_00113"/>
    </source>
</evidence>
<proteinExistence type="inferred from homology"/>
<name>QUEA_STRP1</name>